<evidence type="ECO:0000250" key="1"/>
<evidence type="ECO:0000305" key="2"/>
<accession>Q6CV83</accession>
<sequence>MSHIQQAVDIANSSTAGNDLKKQALDFLQQLKSSEDAVQVFSQYLQDPVASDVGRFFALQVLSEQALELPANHEKLYALQQSALQFLRTQLENSSSDGARVSGVGQGSKGVKSTPPEFVRNKVAELFAHLFYNMYGEVNNNMWSSFFVDLIQLVGIASLRDSKSTGVEFNAIGLDLFFRICASINTEIGDQAFVRSKEVQLKNNELKDYMRVQDVELLSNIWFSALLNCQQLPVLASLVLQCVGSYISWIDINLIVQQSYIGTIYEYLKFPQTKLACGQCLCEIISKKMKPADKLQLLSMLNLTDRVVATGSAEDLDVLEQMAKLTNGVALELSMVMDQCNDSQELQSVSSAADEQIINVVSPLVLKFMAHEYDSVTQQCFSFVTNYLAVMKKLFALGGKPGSAVAVNSKRIPIDPAHLNFLKSLGTVCVLKMKIDDSCDSIDDNEEIDEFVENIRSKLKTFQDSIAVINPELYFDIISDNIEQSITEQQDWRVLELAIYQLHNFAESIRNNLFGVNKTEISTSKPAQLMEKYMTTLLNHPTLFQMNNPLVQISFFELVVRHNNFIQVENKDLTLLNIFCTPFSMFSGNERVRLRTWYLFTRLIKTSKPKLSTDFLSMLLSKISPLLSIKASPLAQELDTIFDSQLYLFEGTGVLIGANVNNEYEILDGVLTPLFADLEQCISAQVKNPQVVLQTHHILMAIGTVARGVHSGLVPDNQVNNAKVSERVICKSLIEKFSNIAEVILVTFSYFNKFETIRDAARFSFSRLIPILNNQIIPFASRLISIFLNSDLKPLEMGDFIGFLGQMIHMFKDDDNCYQLFNNLFTPVVEKVFTLETQLEQESSTSSESKSSNGKNVIVTDSFREKINLKKSYYGLLATFVSNNCTSLLLTESNKNILPRVLTDLLSYTAEEIHETSTMKLSINVLVNFINFFGTGICTDPKDRNAINVNKLDGLNEFFITTSIPLLFEIPFKPEYEFNIQDGGCRVIACDLSRLLKALYNINNSSTNNNINENACVKYLTEIYFPQIQFPQSLVVEFINALGTLDAKQFEKYFVQFITNMKQ</sequence>
<proteinExistence type="inferred from homology"/>
<dbReference type="EMBL" id="CR382122">
    <property type="protein sequence ID" value="CAH02549.1"/>
    <property type="molecule type" value="Genomic_DNA"/>
</dbReference>
<dbReference type="RefSeq" id="XP_452156.1">
    <property type="nucleotide sequence ID" value="XM_452156.1"/>
</dbReference>
<dbReference type="SMR" id="Q6CV83"/>
<dbReference type="FunCoup" id="Q6CV83">
    <property type="interactions" value="1113"/>
</dbReference>
<dbReference type="STRING" id="284590.Q6CV83"/>
<dbReference type="PaxDb" id="284590-Q6CV83"/>
<dbReference type="KEGG" id="kla:KLLA0_B14036g"/>
<dbReference type="eggNOG" id="KOG2021">
    <property type="taxonomic scope" value="Eukaryota"/>
</dbReference>
<dbReference type="HOGENOM" id="CLU_004414_0_1_1"/>
<dbReference type="InParanoid" id="Q6CV83"/>
<dbReference type="OMA" id="HEMFLFG"/>
<dbReference type="Proteomes" id="UP000000598">
    <property type="component" value="Chromosome B"/>
</dbReference>
<dbReference type="GO" id="GO:0005737">
    <property type="term" value="C:cytoplasm"/>
    <property type="evidence" value="ECO:0007669"/>
    <property type="project" value="UniProtKB-SubCell"/>
</dbReference>
<dbReference type="GO" id="GO:0016363">
    <property type="term" value="C:nuclear matrix"/>
    <property type="evidence" value="ECO:0007669"/>
    <property type="project" value="TreeGrafter"/>
</dbReference>
<dbReference type="GO" id="GO:0005643">
    <property type="term" value="C:nuclear pore"/>
    <property type="evidence" value="ECO:0007669"/>
    <property type="project" value="TreeGrafter"/>
</dbReference>
<dbReference type="GO" id="GO:0031267">
    <property type="term" value="F:small GTPase binding"/>
    <property type="evidence" value="ECO:0007669"/>
    <property type="project" value="InterPro"/>
</dbReference>
<dbReference type="GO" id="GO:0000049">
    <property type="term" value="F:tRNA binding"/>
    <property type="evidence" value="ECO:0007669"/>
    <property type="project" value="UniProtKB-KW"/>
</dbReference>
<dbReference type="GO" id="GO:0008033">
    <property type="term" value="P:tRNA processing"/>
    <property type="evidence" value="ECO:0007669"/>
    <property type="project" value="UniProtKB-KW"/>
</dbReference>
<dbReference type="GO" id="GO:0071528">
    <property type="term" value="P:tRNA re-export from nucleus"/>
    <property type="evidence" value="ECO:0007669"/>
    <property type="project" value="InterPro"/>
</dbReference>
<dbReference type="Gene3D" id="1.25.10.10">
    <property type="entry name" value="Leucine-rich Repeat Variant"/>
    <property type="match status" value="1"/>
</dbReference>
<dbReference type="InterPro" id="IPR011989">
    <property type="entry name" value="ARM-like"/>
</dbReference>
<dbReference type="InterPro" id="IPR016024">
    <property type="entry name" value="ARM-type_fold"/>
</dbReference>
<dbReference type="InterPro" id="IPR013598">
    <property type="entry name" value="Exportin-1/Importin-b-like"/>
</dbReference>
<dbReference type="InterPro" id="IPR045546">
    <property type="entry name" value="Exportin-T_C"/>
</dbReference>
<dbReference type="InterPro" id="IPR040017">
    <property type="entry name" value="XPOT"/>
</dbReference>
<dbReference type="PANTHER" id="PTHR15952:SF11">
    <property type="entry name" value="EXPORTIN-T"/>
    <property type="match status" value="1"/>
</dbReference>
<dbReference type="PANTHER" id="PTHR15952">
    <property type="entry name" value="EXPORTIN-T/LOS1"/>
    <property type="match status" value="1"/>
</dbReference>
<dbReference type="Pfam" id="PF19282">
    <property type="entry name" value="Exportin-T"/>
    <property type="match status" value="1"/>
</dbReference>
<dbReference type="Pfam" id="PF08389">
    <property type="entry name" value="Xpo1"/>
    <property type="match status" value="1"/>
</dbReference>
<dbReference type="SUPFAM" id="SSF48371">
    <property type="entry name" value="ARM repeat"/>
    <property type="match status" value="1"/>
</dbReference>
<organism>
    <name type="scientific">Kluyveromyces lactis (strain ATCC 8585 / CBS 2359 / DSM 70799 / NBRC 1267 / NRRL Y-1140 / WM37)</name>
    <name type="common">Yeast</name>
    <name type="synonym">Candida sphaerica</name>
    <dbReference type="NCBI Taxonomy" id="284590"/>
    <lineage>
        <taxon>Eukaryota</taxon>
        <taxon>Fungi</taxon>
        <taxon>Dikarya</taxon>
        <taxon>Ascomycota</taxon>
        <taxon>Saccharomycotina</taxon>
        <taxon>Saccharomycetes</taxon>
        <taxon>Saccharomycetales</taxon>
        <taxon>Saccharomycetaceae</taxon>
        <taxon>Kluyveromyces</taxon>
    </lineage>
</organism>
<feature type="chain" id="PRO_0000343094" description="Exportin-T">
    <location>
        <begin position="1"/>
        <end position="1063"/>
    </location>
</feature>
<comment type="function">
    <text evidence="1">tRNA nucleus export receptor which facilitates tRNA translocation across the nuclear pore complex. Involved in pre-tRNA splicing, probably by affecting the interaction of pre-tRNA with splicing endonuclease (By similarity).</text>
</comment>
<comment type="subcellular location">
    <subcellularLocation>
        <location evidence="1">Nucleus</location>
    </subcellularLocation>
    <subcellularLocation>
        <location evidence="1">Cytoplasm</location>
    </subcellularLocation>
    <text evidence="1">Shuttles between the nucleus and the cytoplasm.</text>
</comment>
<comment type="similarity">
    <text evidence="2">Belongs to the exportin family.</text>
</comment>
<reference key="1">
    <citation type="journal article" date="2004" name="Nature">
        <title>Genome evolution in yeasts.</title>
        <authorList>
            <person name="Dujon B."/>
            <person name="Sherman D."/>
            <person name="Fischer G."/>
            <person name="Durrens P."/>
            <person name="Casaregola S."/>
            <person name="Lafontaine I."/>
            <person name="de Montigny J."/>
            <person name="Marck C."/>
            <person name="Neuveglise C."/>
            <person name="Talla E."/>
            <person name="Goffard N."/>
            <person name="Frangeul L."/>
            <person name="Aigle M."/>
            <person name="Anthouard V."/>
            <person name="Babour A."/>
            <person name="Barbe V."/>
            <person name="Barnay S."/>
            <person name="Blanchin S."/>
            <person name="Beckerich J.-M."/>
            <person name="Beyne E."/>
            <person name="Bleykasten C."/>
            <person name="Boisrame A."/>
            <person name="Boyer J."/>
            <person name="Cattolico L."/>
            <person name="Confanioleri F."/>
            <person name="de Daruvar A."/>
            <person name="Despons L."/>
            <person name="Fabre E."/>
            <person name="Fairhead C."/>
            <person name="Ferry-Dumazet H."/>
            <person name="Groppi A."/>
            <person name="Hantraye F."/>
            <person name="Hennequin C."/>
            <person name="Jauniaux N."/>
            <person name="Joyet P."/>
            <person name="Kachouri R."/>
            <person name="Kerrest A."/>
            <person name="Koszul R."/>
            <person name="Lemaire M."/>
            <person name="Lesur I."/>
            <person name="Ma L."/>
            <person name="Muller H."/>
            <person name="Nicaud J.-M."/>
            <person name="Nikolski M."/>
            <person name="Oztas S."/>
            <person name="Ozier-Kalogeropoulos O."/>
            <person name="Pellenz S."/>
            <person name="Potier S."/>
            <person name="Richard G.-F."/>
            <person name="Straub M.-L."/>
            <person name="Suleau A."/>
            <person name="Swennen D."/>
            <person name="Tekaia F."/>
            <person name="Wesolowski-Louvel M."/>
            <person name="Westhof E."/>
            <person name="Wirth B."/>
            <person name="Zeniou-Meyer M."/>
            <person name="Zivanovic Y."/>
            <person name="Bolotin-Fukuhara M."/>
            <person name="Thierry A."/>
            <person name="Bouchier C."/>
            <person name="Caudron B."/>
            <person name="Scarpelli C."/>
            <person name="Gaillardin C."/>
            <person name="Weissenbach J."/>
            <person name="Wincker P."/>
            <person name="Souciet J.-L."/>
        </authorList>
    </citation>
    <scope>NUCLEOTIDE SEQUENCE [LARGE SCALE GENOMIC DNA]</scope>
    <source>
        <strain>ATCC 8585 / CBS 2359 / DSM 70799 / NBRC 1267 / NRRL Y-1140 / WM37</strain>
    </source>
</reference>
<keyword id="KW-0963">Cytoplasm</keyword>
<keyword id="KW-0539">Nucleus</keyword>
<keyword id="KW-1185">Reference proteome</keyword>
<keyword id="KW-0694">RNA-binding</keyword>
<keyword id="KW-0813">Transport</keyword>
<keyword id="KW-0819">tRNA processing</keyword>
<keyword id="KW-0820">tRNA-binding</keyword>
<protein>
    <recommendedName>
        <fullName>Exportin-T</fullName>
    </recommendedName>
    <alternativeName>
        <fullName>Exportin(tRNA)</fullName>
    </alternativeName>
    <alternativeName>
        <fullName>Karyopherin-beta</fullName>
    </alternativeName>
    <alternativeName>
        <fullName>tRNA exportin</fullName>
    </alternativeName>
</protein>
<name>XPOT_KLULA</name>
<gene>
    <name type="primary">LOS1</name>
    <name type="ordered locus">KLLA0B14036g</name>
</gene>